<dbReference type="EMBL" id="CP000668">
    <property type="protein sequence ID" value="ABP38602.1"/>
    <property type="molecule type" value="Genomic_DNA"/>
</dbReference>
<dbReference type="RefSeq" id="WP_011906138.1">
    <property type="nucleotide sequence ID" value="NZ_CP009715.1"/>
</dbReference>
<dbReference type="SMR" id="A4TH40"/>
<dbReference type="KEGG" id="ypp:YPDSF_0183"/>
<dbReference type="PATRIC" id="fig|386656.14.peg.1471"/>
<dbReference type="GO" id="GO:0005886">
    <property type="term" value="C:plasma membrane"/>
    <property type="evidence" value="ECO:0007669"/>
    <property type="project" value="UniProtKB-SubCell"/>
</dbReference>
<dbReference type="GO" id="GO:0016036">
    <property type="term" value="P:cellular response to phosphate starvation"/>
    <property type="evidence" value="ECO:0007669"/>
    <property type="project" value="InterPro"/>
</dbReference>
<dbReference type="HAMAP" id="MF_01048">
    <property type="entry name" value="PsiE"/>
    <property type="match status" value="1"/>
</dbReference>
<dbReference type="InterPro" id="IPR009315">
    <property type="entry name" value="P_starv_induced_PsiE"/>
</dbReference>
<dbReference type="InterPro" id="IPR020948">
    <property type="entry name" value="P_starv_induced_PsiE-like"/>
</dbReference>
<dbReference type="NCBIfam" id="NF002764">
    <property type="entry name" value="PRK02833.1-2"/>
    <property type="match status" value="1"/>
</dbReference>
<dbReference type="NCBIfam" id="NF002765">
    <property type="entry name" value="PRK02833.1-3"/>
    <property type="match status" value="1"/>
</dbReference>
<dbReference type="PANTHER" id="PTHR37819">
    <property type="entry name" value="PROTEIN PSIE"/>
    <property type="match status" value="1"/>
</dbReference>
<dbReference type="PANTHER" id="PTHR37819:SF1">
    <property type="entry name" value="PROTEIN PSIE"/>
    <property type="match status" value="1"/>
</dbReference>
<dbReference type="Pfam" id="PF06146">
    <property type="entry name" value="PsiE"/>
    <property type="match status" value="1"/>
</dbReference>
<dbReference type="PIRSF" id="PIRSF029598">
    <property type="entry name" value="PsiE"/>
    <property type="match status" value="1"/>
</dbReference>
<accession>A4TH40</accession>
<feature type="chain" id="PRO_1000064326" description="Protein PsiE homolog">
    <location>
        <begin position="1"/>
        <end position="135"/>
    </location>
</feature>
<feature type="transmembrane region" description="Helical" evidence="1">
    <location>
        <begin position="20"/>
        <end position="40"/>
    </location>
</feature>
<feature type="transmembrane region" description="Helical" evidence="1">
    <location>
        <begin position="54"/>
        <end position="74"/>
    </location>
</feature>
<feature type="transmembrane region" description="Helical" evidence="1">
    <location>
        <begin position="82"/>
        <end position="102"/>
    </location>
</feature>
<feature type="transmembrane region" description="Helical" evidence="1">
    <location>
        <begin position="107"/>
        <end position="127"/>
    </location>
</feature>
<name>PSIE_YERPP</name>
<comment type="subcellular location">
    <subcellularLocation>
        <location evidence="1">Cell inner membrane</location>
        <topology evidence="1">Multi-pass membrane protein</topology>
    </subcellularLocation>
</comment>
<comment type="similarity">
    <text evidence="1">Belongs to the PsiE family.</text>
</comment>
<protein>
    <recommendedName>
        <fullName evidence="1">Protein PsiE homolog</fullName>
    </recommendedName>
</protein>
<organism>
    <name type="scientific">Yersinia pestis (strain Pestoides F)</name>
    <dbReference type="NCBI Taxonomy" id="386656"/>
    <lineage>
        <taxon>Bacteria</taxon>
        <taxon>Pseudomonadati</taxon>
        <taxon>Pseudomonadota</taxon>
        <taxon>Gammaproteobacteria</taxon>
        <taxon>Enterobacterales</taxon>
        <taxon>Yersiniaceae</taxon>
        <taxon>Yersinia</taxon>
    </lineage>
</organism>
<evidence type="ECO:0000255" key="1">
    <source>
        <dbReference type="HAMAP-Rule" id="MF_01048"/>
    </source>
</evidence>
<sequence length="135" mass="15617">MAKNSRSPWIAKNLQRLLNVGLIMLAAILVVFLVKETIHLGKVLFLSNQETSSYMLIEGIVIYFLYFEFIALIVKYFESGYHFPLRYFIYIGITAIIRLIIVDHENPIDTLIYSGSILVLVVTLYLANTERLKRE</sequence>
<keyword id="KW-0997">Cell inner membrane</keyword>
<keyword id="KW-1003">Cell membrane</keyword>
<keyword id="KW-0472">Membrane</keyword>
<keyword id="KW-0812">Transmembrane</keyword>
<keyword id="KW-1133">Transmembrane helix</keyword>
<reference key="1">
    <citation type="submission" date="2007-02" db="EMBL/GenBank/DDBJ databases">
        <title>Complete sequence of chromosome of Yersinia pestis Pestoides F.</title>
        <authorList>
            <consortium name="US DOE Joint Genome Institute"/>
            <person name="Copeland A."/>
            <person name="Lucas S."/>
            <person name="Lapidus A."/>
            <person name="Barry K."/>
            <person name="Detter J.C."/>
            <person name="Glavina del Rio T."/>
            <person name="Hammon N."/>
            <person name="Israni S."/>
            <person name="Dalin E."/>
            <person name="Tice H."/>
            <person name="Pitluck S."/>
            <person name="Di Bartolo G."/>
            <person name="Chain P."/>
            <person name="Malfatti S."/>
            <person name="Shin M."/>
            <person name="Vergez L."/>
            <person name="Schmutz J."/>
            <person name="Larimer F."/>
            <person name="Land M."/>
            <person name="Hauser L."/>
            <person name="Worsham P."/>
            <person name="Chu M."/>
            <person name="Bearden S."/>
            <person name="Garcia E."/>
            <person name="Richardson P."/>
        </authorList>
    </citation>
    <scope>NUCLEOTIDE SEQUENCE [LARGE SCALE GENOMIC DNA]</scope>
    <source>
        <strain>Pestoides F</strain>
    </source>
</reference>
<gene>
    <name evidence="1" type="primary">psiE</name>
    <name type="ordered locus">YPDSF_0183</name>
</gene>
<proteinExistence type="inferred from homology"/>